<geneLocation type="chloroplast"/>
<reference key="1">
    <citation type="journal article" date="2006" name="Mol. Biol. Evol.">
        <title>The complete chloroplast genome sequence of Pelargonium x hortorum: organization and evolution of the largest and most highly rearranged chloroplast genome of land plants.</title>
        <authorList>
            <person name="Chumley T.W."/>
            <person name="Palmer J.D."/>
            <person name="Mower J.P."/>
            <person name="Fourcade H.M."/>
            <person name="Calie P.J."/>
            <person name="Boore J.L."/>
            <person name="Jansen R.K."/>
        </authorList>
    </citation>
    <scope>NUCLEOTIDE SEQUENCE [LARGE SCALE GENOMIC DNA]</scope>
    <source>
        <strain>cv. Ringo White</strain>
    </source>
</reference>
<sequence>METATLVAISISGLLVSFTGYALYTAFGQPSQQLRDPFEEHGD</sequence>
<protein>
    <recommendedName>
        <fullName evidence="1">Protein PsbN</fullName>
    </recommendedName>
</protein>
<proteinExistence type="inferred from homology"/>
<name>PSBN_PELHO</name>
<gene>
    <name evidence="1" type="primary">psbN</name>
</gene>
<feature type="chain" id="PRO_0000276276" description="Protein PsbN">
    <location>
        <begin position="1"/>
        <end position="43"/>
    </location>
</feature>
<feature type="transmembrane region" description="Helical" evidence="1">
    <location>
        <begin position="5"/>
        <end position="27"/>
    </location>
</feature>
<accession>Q06FP0</accession>
<organism>
    <name type="scientific">Pelargonium hortorum</name>
    <name type="common">Common geranium</name>
    <name type="synonym">Pelargonium inquinans x Pelargonium zonale</name>
    <dbReference type="NCBI Taxonomy" id="4031"/>
    <lineage>
        <taxon>Eukaryota</taxon>
        <taxon>Viridiplantae</taxon>
        <taxon>Streptophyta</taxon>
        <taxon>Embryophyta</taxon>
        <taxon>Tracheophyta</taxon>
        <taxon>Spermatophyta</taxon>
        <taxon>Magnoliopsida</taxon>
        <taxon>eudicotyledons</taxon>
        <taxon>Gunneridae</taxon>
        <taxon>Pentapetalae</taxon>
        <taxon>rosids</taxon>
        <taxon>malvids</taxon>
        <taxon>Geraniales</taxon>
        <taxon>Geraniaceae</taxon>
        <taxon>Pelargonium</taxon>
    </lineage>
</organism>
<dbReference type="EMBL" id="DQ897681">
    <property type="protein sequence ID" value="ABI17333.1"/>
    <property type="molecule type" value="Genomic_DNA"/>
</dbReference>
<dbReference type="EMBL" id="DQ897681">
    <property type="protein sequence ID" value="ABI17307.1"/>
    <property type="molecule type" value="Genomic_DNA"/>
</dbReference>
<dbReference type="RefSeq" id="YP_784115.1">
    <property type="nucleotide sequence ID" value="NC_008454.1"/>
</dbReference>
<dbReference type="RefSeq" id="YP_784141.1">
    <property type="nucleotide sequence ID" value="NC_008454.1"/>
</dbReference>
<dbReference type="SMR" id="Q06FP0"/>
<dbReference type="GeneID" id="4362789"/>
<dbReference type="GeneID" id="4362870"/>
<dbReference type="GO" id="GO:0009535">
    <property type="term" value="C:chloroplast thylakoid membrane"/>
    <property type="evidence" value="ECO:0007669"/>
    <property type="project" value="UniProtKB-SubCell"/>
</dbReference>
<dbReference type="GO" id="GO:0015979">
    <property type="term" value="P:photosynthesis"/>
    <property type="evidence" value="ECO:0007669"/>
    <property type="project" value="InterPro"/>
</dbReference>
<dbReference type="HAMAP" id="MF_00293">
    <property type="entry name" value="PSII_PsbN"/>
    <property type="match status" value="1"/>
</dbReference>
<dbReference type="InterPro" id="IPR003398">
    <property type="entry name" value="PSII_PsbN"/>
</dbReference>
<dbReference type="PANTHER" id="PTHR35326">
    <property type="entry name" value="PROTEIN PSBN"/>
    <property type="match status" value="1"/>
</dbReference>
<dbReference type="PANTHER" id="PTHR35326:SF3">
    <property type="entry name" value="PROTEIN PSBN"/>
    <property type="match status" value="1"/>
</dbReference>
<dbReference type="Pfam" id="PF02468">
    <property type="entry name" value="PsbN"/>
    <property type="match status" value="1"/>
</dbReference>
<keyword id="KW-0150">Chloroplast</keyword>
<keyword id="KW-0472">Membrane</keyword>
<keyword id="KW-0934">Plastid</keyword>
<keyword id="KW-0793">Thylakoid</keyword>
<keyword id="KW-0812">Transmembrane</keyword>
<keyword id="KW-1133">Transmembrane helix</keyword>
<comment type="function">
    <text evidence="1">May play a role in photosystem I and II biogenesis.</text>
</comment>
<comment type="subcellular location">
    <subcellularLocation>
        <location evidence="1">Plastid</location>
        <location evidence="1">Chloroplast thylakoid membrane</location>
        <topology evidence="1">Single-pass membrane protein</topology>
    </subcellularLocation>
</comment>
<comment type="similarity">
    <text evidence="1">Belongs to the PsbN family.</text>
</comment>
<comment type="caution">
    <text evidence="1">Originally thought to be a component of PSII; based on experiments in Synechocystis, N.tabacum and barley, and its absence from PSII in T.elongatus and T.vulcanus, this is probably not true.</text>
</comment>
<evidence type="ECO:0000255" key="1">
    <source>
        <dbReference type="HAMAP-Rule" id="MF_00293"/>
    </source>
</evidence>